<gene>
    <name evidence="1" type="primary">dcd</name>
    <name type="ordered locus">FTN_0873</name>
</gene>
<sequence length="188" mass="21124">MTIKSDKWIKKMSQEHNMIEPFEAGQVKVINNQKIVSYGTSSYGYDVRCADEFKIFTNINSSIVDPKNFNDKNFVDFKGDVCIIPPNSFALARTVEKFKIPRDTLVVCLGKSTYARCGIIVNVTPLEPEWEGYVTLEFSNTTPLPAKIYANEGVAQMLFFQSDEECETSYADKGGKYQGQVGVTLPKC</sequence>
<feature type="chain" id="PRO_1000009726" description="dCTP deaminase">
    <location>
        <begin position="1"/>
        <end position="188"/>
    </location>
</feature>
<feature type="active site" description="Proton donor/acceptor" evidence="1">
    <location>
        <position position="137"/>
    </location>
</feature>
<feature type="binding site" evidence="1">
    <location>
        <begin position="111"/>
        <end position="116"/>
    </location>
    <ligand>
        <name>dCTP</name>
        <dbReference type="ChEBI" id="CHEBI:61481"/>
    </ligand>
</feature>
<feature type="binding site" evidence="1">
    <location>
        <begin position="135"/>
        <end position="137"/>
    </location>
    <ligand>
        <name>dCTP</name>
        <dbReference type="ChEBI" id="CHEBI:61481"/>
    </ligand>
</feature>
<feature type="binding site" evidence="1">
    <location>
        <position position="156"/>
    </location>
    <ligand>
        <name>dCTP</name>
        <dbReference type="ChEBI" id="CHEBI:61481"/>
    </ligand>
</feature>
<feature type="binding site" evidence="1">
    <location>
        <position position="170"/>
    </location>
    <ligand>
        <name>dCTP</name>
        <dbReference type="ChEBI" id="CHEBI:61481"/>
    </ligand>
</feature>
<feature type="binding site" evidence="1">
    <location>
        <position position="180"/>
    </location>
    <ligand>
        <name>dCTP</name>
        <dbReference type="ChEBI" id="CHEBI:61481"/>
    </ligand>
</feature>
<keyword id="KW-0378">Hydrolase</keyword>
<keyword id="KW-0546">Nucleotide metabolism</keyword>
<keyword id="KW-0547">Nucleotide-binding</keyword>
<dbReference type="EC" id="3.5.4.13" evidence="1"/>
<dbReference type="EMBL" id="CP000439">
    <property type="protein sequence ID" value="ABK89761.1"/>
    <property type="molecule type" value="Genomic_DNA"/>
</dbReference>
<dbReference type="RefSeq" id="WP_003016296.1">
    <property type="nucleotide sequence ID" value="NZ_CP009633.1"/>
</dbReference>
<dbReference type="SMR" id="A0Q696"/>
<dbReference type="GeneID" id="75265387"/>
<dbReference type="KEGG" id="ftn:FTN_0873"/>
<dbReference type="BioCyc" id="FTUL401614:G1G75-910-MONOMER"/>
<dbReference type="UniPathway" id="UPA00610">
    <property type="reaction ID" value="UER00665"/>
</dbReference>
<dbReference type="Proteomes" id="UP000000762">
    <property type="component" value="Chromosome"/>
</dbReference>
<dbReference type="GO" id="GO:0008829">
    <property type="term" value="F:dCTP deaminase activity"/>
    <property type="evidence" value="ECO:0007669"/>
    <property type="project" value="UniProtKB-UniRule"/>
</dbReference>
<dbReference type="GO" id="GO:0000166">
    <property type="term" value="F:nucleotide binding"/>
    <property type="evidence" value="ECO:0007669"/>
    <property type="project" value="UniProtKB-KW"/>
</dbReference>
<dbReference type="GO" id="GO:0006226">
    <property type="term" value="P:dUMP biosynthetic process"/>
    <property type="evidence" value="ECO:0007669"/>
    <property type="project" value="UniProtKB-UniPathway"/>
</dbReference>
<dbReference type="GO" id="GO:0006229">
    <property type="term" value="P:dUTP biosynthetic process"/>
    <property type="evidence" value="ECO:0007669"/>
    <property type="project" value="UniProtKB-UniRule"/>
</dbReference>
<dbReference type="GO" id="GO:0015949">
    <property type="term" value="P:nucleobase-containing small molecule interconversion"/>
    <property type="evidence" value="ECO:0007669"/>
    <property type="project" value="TreeGrafter"/>
</dbReference>
<dbReference type="CDD" id="cd07557">
    <property type="entry name" value="trimeric_dUTPase"/>
    <property type="match status" value="1"/>
</dbReference>
<dbReference type="FunFam" id="2.70.40.10:FF:000001">
    <property type="entry name" value="dCTP deaminase"/>
    <property type="match status" value="1"/>
</dbReference>
<dbReference type="Gene3D" id="2.70.40.10">
    <property type="match status" value="1"/>
</dbReference>
<dbReference type="HAMAP" id="MF_00146">
    <property type="entry name" value="dCTP_deaminase"/>
    <property type="match status" value="1"/>
</dbReference>
<dbReference type="InterPro" id="IPR011962">
    <property type="entry name" value="dCTP_deaminase"/>
</dbReference>
<dbReference type="InterPro" id="IPR036157">
    <property type="entry name" value="dUTPase-like_sf"/>
</dbReference>
<dbReference type="InterPro" id="IPR033704">
    <property type="entry name" value="dUTPase_trimeric"/>
</dbReference>
<dbReference type="NCBIfam" id="TIGR02274">
    <property type="entry name" value="dCTP_deam"/>
    <property type="match status" value="1"/>
</dbReference>
<dbReference type="PANTHER" id="PTHR42680">
    <property type="entry name" value="DCTP DEAMINASE"/>
    <property type="match status" value="1"/>
</dbReference>
<dbReference type="PANTHER" id="PTHR42680:SF3">
    <property type="entry name" value="DCTP DEAMINASE"/>
    <property type="match status" value="1"/>
</dbReference>
<dbReference type="Pfam" id="PF22769">
    <property type="entry name" value="DCD"/>
    <property type="match status" value="1"/>
</dbReference>
<dbReference type="SUPFAM" id="SSF51283">
    <property type="entry name" value="dUTPase-like"/>
    <property type="match status" value="1"/>
</dbReference>
<accession>A0Q696</accession>
<organism>
    <name type="scientific">Francisella tularensis subsp. novicida (strain U112)</name>
    <dbReference type="NCBI Taxonomy" id="401614"/>
    <lineage>
        <taxon>Bacteria</taxon>
        <taxon>Pseudomonadati</taxon>
        <taxon>Pseudomonadota</taxon>
        <taxon>Gammaproteobacteria</taxon>
        <taxon>Thiotrichales</taxon>
        <taxon>Francisellaceae</taxon>
        <taxon>Francisella</taxon>
    </lineage>
</organism>
<proteinExistence type="inferred from homology"/>
<name>DCD_FRATN</name>
<reference key="1">
    <citation type="journal article" date="2007" name="Genome Biol.">
        <title>Comparison of Francisella tularensis genomes reveals evolutionary events associated with the emergence of human pathogenic strains.</title>
        <authorList>
            <person name="Rohmer L."/>
            <person name="Fong C."/>
            <person name="Abmayr S."/>
            <person name="Wasnick M."/>
            <person name="Larson Freeman T.J."/>
            <person name="Radey M."/>
            <person name="Guina T."/>
            <person name="Svensson K."/>
            <person name="Hayden H.S."/>
            <person name="Jacobs M."/>
            <person name="Gallagher L.A."/>
            <person name="Manoil C."/>
            <person name="Ernst R.K."/>
            <person name="Drees B."/>
            <person name="Buckley D."/>
            <person name="Haugen E."/>
            <person name="Bovee D."/>
            <person name="Zhou Y."/>
            <person name="Chang J."/>
            <person name="Levy R."/>
            <person name="Lim R."/>
            <person name="Gillett W."/>
            <person name="Guenthener D."/>
            <person name="Kang A."/>
            <person name="Shaffer S.A."/>
            <person name="Taylor G."/>
            <person name="Chen J."/>
            <person name="Gallis B."/>
            <person name="D'Argenio D.A."/>
            <person name="Forsman M."/>
            <person name="Olson M.V."/>
            <person name="Goodlett D.R."/>
            <person name="Kaul R."/>
            <person name="Miller S.I."/>
            <person name="Brittnacher M.J."/>
        </authorList>
    </citation>
    <scope>NUCLEOTIDE SEQUENCE [LARGE SCALE GENOMIC DNA]</scope>
    <source>
        <strain>U112</strain>
    </source>
</reference>
<comment type="function">
    <text evidence="1">Catalyzes the deamination of dCTP to dUTP.</text>
</comment>
<comment type="catalytic activity">
    <reaction evidence="1">
        <text>dCTP + H2O + H(+) = dUTP + NH4(+)</text>
        <dbReference type="Rhea" id="RHEA:22680"/>
        <dbReference type="ChEBI" id="CHEBI:15377"/>
        <dbReference type="ChEBI" id="CHEBI:15378"/>
        <dbReference type="ChEBI" id="CHEBI:28938"/>
        <dbReference type="ChEBI" id="CHEBI:61481"/>
        <dbReference type="ChEBI" id="CHEBI:61555"/>
        <dbReference type="EC" id="3.5.4.13"/>
    </reaction>
</comment>
<comment type="pathway">
    <text evidence="1">Pyrimidine metabolism; dUMP biosynthesis; dUMP from dCTP (dUTP route): step 1/2.</text>
</comment>
<comment type="subunit">
    <text evidence="1">Homotrimer.</text>
</comment>
<comment type="similarity">
    <text evidence="1">Belongs to the dCTP deaminase family.</text>
</comment>
<evidence type="ECO:0000255" key="1">
    <source>
        <dbReference type="HAMAP-Rule" id="MF_00146"/>
    </source>
</evidence>
<protein>
    <recommendedName>
        <fullName evidence="1">dCTP deaminase</fullName>
        <ecNumber evidence="1">3.5.4.13</ecNumber>
    </recommendedName>
    <alternativeName>
        <fullName evidence="1">Deoxycytidine triphosphate deaminase</fullName>
    </alternativeName>
</protein>